<evidence type="ECO:0000255" key="1"/>
<evidence type="ECO:0000255" key="2">
    <source>
        <dbReference type="PROSITE-ProRule" id="PRU00776"/>
    </source>
</evidence>
<evidence type="ECO:0000269" key="3">
    <source>
    </source>
</evidence>
<evidence type="ECO:0000303" key="4">
    <source>
    </source>
</evidence>
<evidence type="ECO:0000305" key="5"/>
<evidence type="ECO:0000305" key="6">
    <source>
    </source>
</evidence>
<accession>A0A7M6UNN1</accession>
<keyword id="KW-1015">Disulfide bond</keyword>
<keyword id="KW-0646">Protease inhibitor</keyword>
<keyword id="KW-1185">Reference proteome</keyword>
<keyword id="KW-0964">Secreted</keyword>
<keyword id="KW-0722">Serine protease inhibitor</keyword>
<keyword id="KW-0732">Signal</keyword>
<name>PISP_NASVI</name>
<protein>
    <recommendedName>
        <fullName evidence="4">Small pacifastin protease inhibitor</fullName>
        <shortName evidence="4">NvSPPI</shortName>
        <shortName evidence="4">PPI</shortName>
    </recommendedName>
</protein>
<proteinExistence type="evidence at transcript level"/>
<dbReference type="RefSeq" id="NP_001155083.1">
    <property type="nucleotide sequence ID" value="NM_001161611.1"/>
</dbReference>
<dbReference type="SMR" id="A0A7M6UNN1"/>
<dbReference type="EnsemblMetazoa" id="NM_001161611">
    <property type="protein sequence ID" value="NP_001155083"/>
    <property type="gene ID" value="LOC100123852"/>
</dbReference>
<dbReference type="GeneID" id="100123852"/>
<dbReference type="KEGG" id="nvi:100123852"/>
<dbReference type="InParanoid" id="A0A7M6UNN1"/>
<dbReference type="Proteomes" id="UP000002358">
    <property type="component" value="Chromosome 1"/>
</dbReference>
<dbReference type="GO" id="GO:0005576">
    <property type="term" value="C:extracellular region"/>
    <property type="evidence" value="ECO:0007669"/>
    <property type="project" value="UniProtKB-SubCell"/>
</dbReference>
<dbReference type="GO" id="GO:0004867">
    <property type="term" value="F:serine-type endopeptidase inhibitor activity"/>
    <property type="evidence" value="ECO:0007669"/>
    <property type="project" value="UniProtKB-KW"/>
</dbReference>
<dbReference type="InterPro" id="IPR008037">
    <property type="entry name" value="Pacifastin_dom"/>
</dbReference>
<dbReference type="InterPro" id="IPR036201">
    <property type="entry name" value="Pacifastin_dom_sf"/>
</dbReference>
<dbReference type="Pfam" id="PF05375">
    <property type="entry name" value="Pacifastin_I"/>
    <property type="match status" value="1"/>
</dbReference>
<dbReference type="SUPFAM" id="SSF57283">
    <property type="entry name" value="PMP inhibitors"/>
    <property type="match status" value="1"/>
</dbReference>
<dbReference type="PROSITE" id="PS51446">
    <property type="entry name" value="PACIFASTIN"/>
    <property type="match status" value="1"/>
</dbReference>
<reference key="1">
    <citation type="journal article" date="2010" name="Science">
        <title>Functional and evolutionary insights from the genomes of three parasitoid Nasonia species.</title>
        <authorList>
            <consortium name="Nasonia Genome Working Group"/>
            <person name="Werren J.H."/>
            <person name="Richards S."/>
            <person name="Desjardins C.A."/>
            <person name="Niehuis O."/>
            <person name="Gadau J."/>
            <person name="Colbourne J.K."/>
            <person name="Werren J.H."/>
            <person name="Richards S."/>
            <person name="Desjardins C.A."/>
            <person name="Niehuis O."/>
            <person name="Gadau J."/>
            <person name="Colbourne J.K."/>
            <person name="Beukeboom L.W."/>
            <person name="Desplan C."/>
            <person name="Elsik C.G."/>
            <person name="Grimmelikhuijzen C.J."/>
            <person name="Kitts P."/>
            <person name="Lynch J.A."/>
            <person name="Murphy T."/>
            <person name="Oliveira D.C."/>
            <person name="Smith C.D."/>
            <person name="van de Zande L."/>
            <person name="Worley K.C."/>
            <person name="Zdobnov E.M."/>
            <person name="Aerts M."/>
            <person name="Albert S."/>
            <person name="Anaya V.H."/>
            <person name="Anzola J.M."/>
            <person name="Barchuk A.R."/>
            <person name="Behura S.K."/>
            <person name="Bera A.N."/>
            <person name="Berenbaum M.R."/>
            <person name="Bertossa R.C."/>
            <person name="Bitondi M.M."/>
            <person name="Bordenstein S.R."/>
            <person name="Bork P."/>
            <person name="Bornberg-Bauer E."/>
            <person name="Brunain M."/>
            <person name="Cazzamali G."/>
            <person name="Chaboub L."/>
            <person name="Chacko J."/>
            <person name="Chavez D."/>
            <person name="Childers C.P."/>
            <person name="Choi J.H."/>
            <person name="Clark M.E."/>
            <person name="Claudianos C."/>
            <person name="Clinton R.A."/>
            <person name="Cree A.G."/>
            <person name="Cristino A.S."/>
            <person name="Dang P.M."/>
            <person name="Darby A.C."/>
            <person name="de Graaf D.C."/>
            <person name="Devreese B."/>
            <person name="Dinh H.H."/>
            <person name="Edwards R."/>
            <person name="Elango N."/>
            <person name="Elhaik E."/>
            <person name="Ermolaeva O."/>
            <person name="Evans J.D."/>
            <person name="Foret S."/>
            <person name="Fowler G.R."/>
            <person name="Gerlach D."/>
            <person name="Gibson J.D."/>
            <person name="Gilbert D.G."/>
            <person name="Graur D."/>
            <person name="Grunder S."/>
            <person name="Hagen D.E."/>
            <person name="Han Y."/>
            <person name="Hauser F."/>
            <person name="Hultmark D."/>
            <person name="Hunter H.C. IV"/>
            <person name="Hurst G.D."/>
            <person name="Jhangian S.N."/>
            <person name="Jiang H."/>
            <person name="Johnson R.M."/>
            <person name="Jones A.K."/>
            <person name="Junier T."/>
            <person name="Kadowaki T."/>
            <person name="Kamping A."/>
            <person name="Kapustin Y."/>
            <person name="Kechavarzi B."/>
            <person name="Kim J."/>
            <person name="Kim J."/>
            <person name="Kiryutin B."/>
            <person name="Koevoets T."/>
            <person name="Kovar C.L."/>
            <person name="Kriventseva E.V."/>
            <person name="Kucharski R."/>
            <person name="Lee H."/>
            <person name="Lee S.L."/>
            <person name="Lees K."/>
            <person name="Lewis L.R."/>
            <person name="Loehlin D.W."/>
            <person name="Logsdon J.M. Jr."/>
            <person name="Lopez J.A."/>
            <person name="Lozado R.J."/>
            <person name="Maglott D."/>
            <person name="Maleszka R."/>
            <person name="Mayampurath A."/>
            <person name="Mazur D.J."/>
            <person name="McClure M.A."/>
            <person name="Moore A.D."/>
            <person name="Morgan M.B."/>
            <person name="Muller J."/>
            <person name="Munoz-Torres M.C."/>
            <person name="Muzny D.M."/>
            <person name="Nazareth L.V."/>
            <person name="Neupert S."/>
            <person name="Nguyen N.B."/>
            <person name="Nunes F.M."/>
            <person name="Oakeshott J.G."/>
            <person name="Okwuonu G.O."/>
            <person name="Pannebakker B.A."/>
            <person name="Pejaver V.R."/>
            <person name="Peng Z."/>
            <person name="Pratt S.C."/>
            <person name="Predel R."/>
            <person name="Pu L.L."/>
            <person name="Ranson H."/>
            <person name="Raychoudhury R."/>
            <person name="Rechtsteiner A."/>
            <person name="Reese J.T."/>
            <person name="Reid J.G."/>
            <person name="Riddle M."/>
            <person name="Robertson H.M."/>
            <person name="Romero-Severson J."/>
            <person name="Rosenberg M."/>
            <person name="Sackton T.B."/>
            <person name="Sattelle D.B."/>
            <person name="Schluns H."/>
            <person name="Schmitt T."/>
            <person name="Schneider M."/>
            <person name="Schuler A."/>
            <person name="Schurko A.M."/>
            <person name="Shuker D.M."/>
            <person name="Simoes Z.L."/>
            <person name="Sinha S."/>
            <person name="Smith Z."/>
            <person name="Solovyev V."/>
            <person name="Souvorov A."/>
            <person name="Springauf A."/>
            <person name="Stafflinger E."/>
            <person name="Stage D.E."/>
            <person name="Stanke M."/>
            <person name="Tanaka Y."/>
            <person name="Telschow A."/>
            <person name="Trent C."/>
            <person name="Vattathil S."/>
            <person name="Verhulst E.C."/>
            <person name="Viljakainen L."/>
            <person name="Wanner K.W."/>
            <person name="Waterhouse R.M."/>
            <person name="Whitfield J.B."/>
            <person name="Wilkes T.E."/>
            <person name="Williamson M."/>
            <person name="Willis J.H."/>
            <person name="Wolschin F."/>
            <person name="Wyder S."/>
            <person name="Yamada T."/>
            <person name="Yi S.V."/>
            <person name="Zecher C.N."/>
            <person name="Zhang L."/>
            <person name="Gibbs R.A."/>
        </authorList>
    </citation>
    <scope>NUCLEOTIDE SEQUENCE [LARGE SCALE GENOMIC DNA]</scope>
    <source>
        <strain>AsymCX</strain>
    </source>
</reference>
<reference key="2">
    <citation type="journal article" date="2017" name="Toxicon">
        <title>Identification of a small pacifastin protease inhibitor from Nasonia vitripennis venom that inhibits humoral immunity of host (Musca domestica).</title>
        <authorList>
            <person name="Qian C."/>
            <person name="Liang D."/>
            <person name="Liu Y."/>
            <person name="Wang P."/>
            <person name="Kausar S."/>
            <person name="Wei G."/>
            <person name="Zhu B."/>
            <person name="Wang L."/>
            <person name="Liu C."/>
        </authorList>
    </citation>
    <scope>NUCLEOTIDE SEQUENCE [MRNA]</scope>
    <scope>FUNCTION</scope>
    <scope>TISSUE SPECIFICITY</scope>
    <scope>DEVELOPMENTAL STAGE</scope>
    <scope>RECOMBINANT EXPRESSION</scope>
</reference>
<sequence>MSKVLKVGLLLLLVAVAASAYAVAEENGAPKENKQLPQIDDYGVTNKCPANQPFKWNCNYCTCGPEGKDASCTRMACPQH</sequence>
<organism>
    <name type="scientific">Nasonia vitripennis</name>
    <name type="common">Parasitic wasp</name>
    <dbReference type="NCBI Taxonomy" id="7425"/>
    <lineage>
        <taxon>Eukaryota</taxon>
        <taxon>Metazoa</taxon>
        <taxon>Ecdysozoa</taxon>
        <taxon>Arthropoda</taxon>
        <taxon>Hexapoda</taxon>
        <taxon>Insecta</taxon>
        <taxon>Pterygota</taxon>
        <taxon>Neoptera</taxon>
        <taxon>Endopterygota</taxon>
        <taxon>Hymenoptera</taxon>
        <taxon>Apocrita</taxon>
        <taxon>Proctotrupomorpha</taxon>
        <taxon>Chalcidoidea</taxon>
        <taxon>Pteromalidae</taxon>
        <taxon>Pteromalinae</taxon>
        <taxon>Nasonia</taxon>
    </lineage>
</organism>
<feature type="signal peptide" evidence="1">
    <location>
        <begin position="1"/>
        <end position="24"/>
    </location>
</feature>
<feature type="propeptide" id="PRO_0000454319" evidence="5">
    <location>
        <begin position="25"/>
        <end position="47"/>
    </location>
</feature>
<feature type="chain" id="PRO_5029545642" description="Small pacifastin protease inhibitor" evidence="5">
    <location>
        <begin position="48"/>
        <end position="80"/>
    </location>
</feature>
<feature type="domain" description="Pacifastin" evidence="2">
    <location>
        <begin position="45"/>
        <end position="80"/>
    </location>
</feature>
<feature type="disulfide bond" evidence="2">
    <location>
        <begin position="48"/>
        <end position="63"/>
    </location>
</feature>
<feature type="disulfide bond" evidence="2">
    <location>
        <begin position="58"/>
        <end position="77"/>
    </location>
</feature>
<feature type="disulfide bond" evidence="2">
    <location>
        <begin position="61"/>
        <end position="72"/>
    </location>
</feature>
<comment type="function">
    <text evidence="3">Parasitic wasp protein that may interfere with the host immune response. The recombinant protein inhibits trypsin activity and prophenoloxidase (PPO) activation, an enzyme essential for both clotting and insect innate immune responses. It does not inhibit activity of chymotrypsin and protease K, and has no effect on phenoloxidase (PO) activity.</text>
</comment>
<comment type="subcellular location">
    <subcellularLocation>
        <location evidence="6">Secreted</location>
    </subcellularLocation>
</comment>
<comment type="tissue specificity">
    <text evidence="3">Expressed in the venom apparatus. Low transcript levels are also detected in other tissues.</text>
</comment>
<comment type="developmental stage">
    <text evidence="3">Transcripts are not detected at 0 and 1st day post eclosion (dpe), weakly expressed at 2nd and 3rd dpe, reach a peak on the 4th dpe, and then decline gradually until 7th dpe.</text>
</comment>
<comment type="similarity">
    <text evidence="5">Belongs to the protease inhibitor I19 family.</text>
</comment>